<protein>
    <recommendedName>
        <fullName evidence="1">Adenylosuccinate synthetase</fullName>
        <shortName evidence="1">AMPSase</shortName>
        <shortName evidence="1">AdSS</shortName>
        <ecNumber evidence="1">6.3.4.4</ecNumber>
    </recommendedName>
    <alternativeName>
        <fullName evidence="1">IMP--aspartate ligase</fullName>
    </alternativeName>
</protein>
<reference key="1">
    <citation type="journal article" date="2004" name="Nucleic Acids Res.">
        <title>Genome sequence of Symbiobacterium thermophilum, an uncultivable bacterium that depends on microbial commensalism.</title>
        <authorList>
            <person name="Ueda K."/>
            <person name="Yamashita A."/>
            <person name="Ishikawa J."/>
            <person name="Shimada M."/>
            <person name="Watsuji T."/>
            <person name="Morimura K."/>
            <person name="Ikeda H."/>
            <person name="Hattori M."/>
            <person name="Beppu T."/>
        </authorList>
    </citation>
    <scope>NUCLEOTIDE SEQUENCE [LARGE SCALE GENOMIC DNA]</scope>
    <source>
        <strain>DSM 24528 / JCM 14929 / IAM 14863 / T</strain>
    </source>
</reference>
<organism>
    <name type="scientific">Symbiobacterium thermophilum (strain DSM 24528 / JCM 14929 / IAM 14863 / T)</name>
    <dbReference type="NCBI Taxonomy" id="292459"/>
    <lineage>
        <taxon>Bacteria</taxon>
        <taxon>Bacillati</taxon>
        <taxon>Bacillota</taxon>
        <taxon>Clostridia</taxon>
        <taxon>Eubacteriales</taxon>
        <taxon>Symbiobacteriaceae</taxon>
        <taxon>Symbiobacterium</taxon>
    </lineage>
</organism>
<proteinExistence type="inferred from homology"/>
<comment type="function">
    <text evidence="1">Plays an important role in the de novo pathway of purine nucleotide biosynthesis. Catalyzes the first committed step in the biosynthesis of AMP from IMP.</text>
</comment>
<comment type="catalytic activity">
    <reaction evidence="1">
        <text>IMP + L-aspartate + GTP = N(6)-(1,2-dicarboxyethyl)-AMP + GDP + phosphate + 2 H(+)</text>
        <dbReference type="Rhea" id="RHEA:15753"/>
        <dbReference type="ChEBI" id="CHEBI:15378"/>
        <dbReference type="ChEBI" id="CHEBI:29991"/>
        <dbReference type="ChEBI" id="CHEBI:37565"/>
        <dbReference type="ChEBI" id="CHEBI:43474"/>
        <dbReference type="ChEBI" id="CHEBI:57567"/>
        <dbReference type="ChEBI" id="CHEBI:58053"/>
        <dbReference type="ChEBI" id="CHEBI:58189"/>
        <dbReference type="EC" id="6.3.4.4"/>
    </reaction>
</comment>
<comment type="cofactor">
    <cofactor evidence="1">
        <name>Mg(2+)</name>
        <dbReference type="ChEBI" id="CHEBI:18420"/>
    </cofactor>
    <text evidence="1">Binds 1 Mg(2+) ion per subunit.</text>
</comment>
<comment type="pathway">
    <text evidence="1">Purine metabolism; AMP biosynthesis via de novo pathway; AMP from IMP: step 1/2.</text>
</comment>
<comment type="subunit">
    <text evidence="1">Homodimer.</text>
</comment>
<comment type="subcellular location">
    <subcellularLocation>
        <location evidence="1">Cytoplasm</location>
    </subcellularLocation>
</comment>
<comment type="similarity">
    <text evidence="1">Belongs to the adenylosuccinate synthetase family.</text>
</comment>
<gene>
    <name evidence="1" type="primary">purA</name>
    <name type="ordered locus">STH3314</name>
</gene>
<sequence length="432" mass="47444">MPVVVVMGAQWGDEGKGKFVDLLAERAQVVVRSTGGSNAGHTVWAGGRQYKLHQVPSGILYPGTLCVIGHGVVLDPPKLLEEMDRLASQGVDLSSLRISGGAHIVFPFHIRLDEAEEDRKGDRKIGTTRRGIGPAYMDKFARVGIRLVDMLDRDEFLPKLTALVEEKNRILEKVYGLPGFTVEEIAEPYLEYAERLRPYVANTVELVNDAIDAGKNVLFEGAQGHLLDIDFGTYPYVTASHPIAAGAIIGAGVGPTKVSRVVGVVKAYTSRVGEGPFPTELHGEEAHRIREEGHEYGTTTGRPRRIGWLDLVMVRYACRVSGITDLAVPHLDTLAKTGLPTLKVCVGYRMPDGTVTREFPVGLKALSQVEPVYEELPNWEWSAEMSTARQYDELPEGARRYVRLIEDVTGVRVSILGVGSERTQAIYRSAIF</sequence>
<dbReference type="EC" id="6.3.4.4" evidence="1"/>
<dbReference type="EMBL" id="AP006840">
    <property type="protein sequence ID" value="BAD42295.1"/>
    <property type="molecule type" value="Genomic_DNA"/>
</dbReference>
<dbReference type="RefSeq" id="WP_011197425.1">
    <property type="nucleotide sequence ID" value="NC_006177.1"/>
</dbReference>
<dbReference type="SMR" id="Q67J55"/>
<dbReference type="STRING" id="292459.STH3314"/>
<dbReference type="KEGG" id="sth:STH3314"/>
<dbReference type="eggNOG" id="COG0104">
    <property type="taxonomic scope" value="Bacteria"/>
</dbReference>
<dbReference type="HOGENOM" id="CLU_029848_0_0_9"/>
<dbReference type="OrthoDB" id="9807553at2"/>
<dbReference type="UniPathway" id="UPA00075">
    <property type="reaction ID" value="UER00335"/>
</dbReference>
<dbReference type="Proteomes" id="UP000000417">
    <property type="component" value="Chromosome"/>
</dbReference>
<dbReference type="GO" id="GO:0005737">
    <property type="term" value="C:cytoplasm"/>
    <property type="evidence" value="ECO:0007669"/>
    <property type="project" value="UniProtKB-SubCell"/>
</dbReference>
<dbReference type="GO" id="GO:0004019">
    <property type="term" value="F:adenylosuccinate synthase activity"/>
    <property type="evidence" value="ECO:0007669"/>
    <property type="project" value="UniProtKB-UniRule"/>
</dbReference>
<dbReference type="GO" id="GO:0005525">
    <property type="term" value="F:GTP binding"/>
    <property type="evidence" value="ECO:0007669"/>
    <property type="project" value="UniProtKB-UniRule"/>
</dbReference>
<dbReference type="GO" id="GO:0000287">
    <property type="term" value="F:magnesium ion binding"/>
    <property type="evidence" value="ECO:0007669"/>
    <property type="project" value="UniProtKB-UniRule"/>
</dbReference>
<dbReference type="GO" id="GO:0044208">
    <property type="term" value="P:'de novo' AMP biosynthetic process"/>
    <property type="evidence" value="ECO:0007669"/>
    <property type="project" value="UniProtKB-UniRule"/>
</dbReference>
<dbReference type="GO" id="GO:0046040">
    <property type="term" value="P:IMP metabolic process"/>
    <property type="evidence" value="ECO:0007669"/>
    <property type="project" value="TreeGrafter"/>
</dbReference>
<dbReference type="CDD" id="cd03108">
    <property type="entry name" value="AdSS"/>
    <property type="match status" value="1"/>
</dbReference>
<dbReference type="FunFam" id="1.10.300.10:FF:000001">
    <property type="entry name" value="Adenylosuccinate synthetase"/>
    <property type="match status" value="1"/>
</dbReference>
<dbReference type="FunFam" id="3.90.170.10:FF:000001">
    <property type="entry name" value="Adenylosuccinate synthetase"/>
    <property type="match status" value="1"/>
</dbReference>
<dbReference type="Gene3D" id="3.40.440.10">
    <property type="entry name" value="Adenylosuccinate Synthetase, subunit A, domain 1"/>
    <property type="match status" value="1"/>
</dbReference>
<dbReference type="Gene3D" id="1.10.300.10">
    <property type="entry name" value="Adenylosuccinate Synthetase, subunit A, domain 2"/>
    <property type="match status" value="1"/>
</dbReference>
<dbReference type="Gene3D" id="3.90.170.10">
    <property type="entry name" value="Adenylosuccinate Synthetase, subunit A, domain 3"/>
    <property type="match status" value="1"/>
</dbReference>
<dbReference type="HAMAP" id="MF_00011">
    <property type="entry name" value="Adenylosucc_synth"/>
    <property type="match status" value="1"/>
</dbReference>
<dbReference type="InterPro" id="IPR018220">
    <property type="entry name" value="Adenylosuccin_syn_GTP-bd"/>
</dbReference>
<dbReference type="InterPro" id="IPR033128">
    <property type="entry name" value="Adenylosuccin_syn_Lys_AS"/>
</dbReference>
<dbReference type="InterPro" id="IPR042109">
    <property type="entry name" value="Adenylosuccinate_synth_dom1"/>
</dbReference>
<dbReference type="InterPro" id="IPR042110">
    <property type="entry name" value="Adenylosuccinate_synth_dom2"/>
</dbReference>
<dbReference type="InterPro" id="IPR042111">
    <property type="entry name" value="Adenylosuccinate_synth_dom3"/>
</dbReference>
<dbReference type="InterPro" id="IPR001114">
    <property type="entry name" value="Adenylosuccinate_synthetase"/>
</dbReference>
<dbReference type="InterPro" id="IPR027417">
    <property type="entry name" value="P-loop_NTPase"/>
</dbReference>
<dbReference type="NCBIfam" id="NF002223">
    <property type="entry name" value="PRK01117.1"/>
    <property type="match status" value="1"/>
</dbReference>
<dbReference type="NCBIfam" id="TIGR00184">
    <property type="entry name" value="purA"/>
    <property type="match status" value="1"/>
</dbReference>
<dbReference type="PANTHER" id="PTHR11846">
    <property type="entry name" value="ADENYLOSUCCINATE SYNTHETASE"/>
    <property type="match status" value="1"/>
</dbReference>
<dbReference type="PANTHER" id="PTHR11846:SF0">
    <property type="entry name" value="ADENYLOSUCCINATE SYNTHETASE"/>
    <property type="match status" value="1"/>
</dbReference>
<dbReference type="Pfam" id="PF00709">
    <property type="entry name" value="Adenylsucc_synt"/>
    <property type="match status" value="1"/>
</dbReference>
<dbReference type="SMART" id="SM00788">
    <property type="entry name" value="Adenylsucc_synt"/>
    <property type="match status" value="1"/>
</dbReference>
<dbReference type="SUPFAM" id="SSF52540">
    <property type="entry name" value="P-loop containing nucleoside triphosphate hydrolases"/>
    <property type="match status" value="1"/>
</dbReference>
<dbReference type="PROSITE" id="PS01266">
    <property type="entry name" value="ADENYLOSUCCIN_SYN_1"/>
    <property type="match status" value="1"/>
</dbReference>
<dbReference type="PROSITE" id="PS00513">
    <property type="entry name" value="ADENYLOSUCCIN_SYN_2"/>
    <property type="match status" value="1"/>
</dbReference>
<evidence type="ECO:0000255" key="1">
    <source>
        <dbReference type="HAMAP-Rule" id="MF_00011"/>
    </source>
</evidence>
<keyword id="KW-0963">Cytoplasm</keyword>
<keyword id="KW-0342">GTP-binding</keyword>
<keyword id="KW-0436">Ligase</keyword>
<keyword id="KW-0460">Magnesium</keyword>
<keyword id="KW-0479">Metal-binding</keyword>
<keyword id="KW-0547">Nucleotide-binding</keyword>
<keyword id="KW-0658">Purine biosynthesis</keyword>
<keyword id="KW-1185">Reference proteome</keyword>
<accession>Q67J55</accession>
<feature type="chain" id="PRO_0000224328" description="Adenylosuccinate synthetase">
    <location>
        <begin position="1"/>
        <end position="432"/>
    </location>
</feature>
<feature type="active site" description="Proton acceptor" evidence="1">
    <location>
        <position position="13"/>
    </location>
</feature>
<feature type="active site" description="Proton donor" evidence="1">
    <location>
        <position position="41"/>
    </location>
</feature>
<feature type="binding site" evidence="1">
    <location>
        <begin position="12"/>
        <end position="18"/>
    </location>
    <ligand>
        <name>GTP</name>
        <dbReference type="ChEBI" id="CHEBI:37565"/>
    </ligand>
</feature>
<feature type="binding site" description="in other chain" evidence="1">
    <location>
        <begin position="13"/>
        <end position="16"/>
    </location>
    <ligand>
        <name>IMP</name>
        <dbReference type="ChEBI" id="CHEBI:58053"/>
        <note>ligand shared between dimeric partners</note>
    </ligand>
</feature>
<feature type="binding site" evidence="1">
    <location>
        <position position="13"/>
    </location>
    <ligand>
        <name>Mg(2+)</name>
        <dbReference type="ChEBI" id="CHEBI:18420"/>
    </ligand>
</feature>
<feature type="binding site" description="in other chain" evidence="1">
    <location>
        <begin position="38"/>
        <end position="41"/>
    </location>
    <ligand>
        <name>IMP</name>
        <dbReference type="ChEBI" id="CHEBI:58053"/>
        <note>ligand shared between dimeric partners</note>
    </ligand>
</feature>
<feature type="binding site" evidence="1">
    <location>
        <begin position="40"/>
        <end position="42"/>
    </location>
    <ligand>
        <name>GTP</name>
        <dbReference type="ChEBI" id="CHEBI:37565"/>
    </ligand>
</feature>
<feature type="binding site" evidence="1">
    <location>
        <position position="40"/>
    </location>
    <ligand>
        <name>Mg(2+)</name>
        <dbReference type="ChEBI" id="CHEBI:18420"/>
    </ligand>
</feature>
<feature type="binding site" description="in other chain" evidence="1">
    <location>
        <position position="128"/>
    </location>
    <ligand>
        <name>IMP</name>
        <dbReference type="ChEBI" id="CHEBI:58053"/>
        <note>ligand shared between dimeric partners</note>
    </ligand>
</feature>
<feature type="binding site" evidence="1">
    <location>
        <position position="142"/>
    </location>
    <ligand>
        <name>IMP</name>
        <dbReference type="ChEBI" id="CHEBI:58053"/>
        <note>ligand shared between dimeric partners</note>
    </ligand>
</feature>
<feature type="binding site" description="in other chain" evidence="1">
    <location>
        <position position="223"/>
    </location>
    <ligand>
        <name>IMP</name>
        <dbReference type="ChEBI" id="CHEBI:58053"/>
        <note>ligand shared between dimeric partners</note>
    </ligand>
</feature>
<feature type="binding site" description="in other chain" evidence="1">
    <location>
        <position position="238"/>
    </location>
    <ligand>
        <name>IMP</name>
        <dbReference type="ChEBI" id="CHEBI:58053"/>
        <note>ligand shared between dimeric partners</note>
    </ligand>
</feature>
<feature type="binding site" evidence="1">
    <location>
        <begin position="298"/>
        <end position="304"/>
    </location>
    <ligand>
        <name>substrate</name>
    </ligand>
</feature>
<feature type="binding site" description="in other chain" evidence="1">
    <location>
        <position position="302"/>
    </location>
    <ligand>
        <name>IMP</name>
        <dbReference type="ChEBI" id="CHEBI:58053"/>
        <note>ligand shared between dimeric partners</note>
    </ligand>
</feature>
<feature type="binding site" evidence="1">
    <location>
        <position position="304"/>
    </location>
    <ligand>
        <name>GTP</name>
        <dbReference type="ChEBI" id="CHEBI:37565"/>
    </ligand>
</feature>
<feature type="binding site" evidence="1">
    <location>
        <begin position="330"/>
        <end position="332"/>
    </location>
    <ligand>
        <name>GTP</name>
        <dbReference type="ChEBI" id="CHEBI:37565"/>
    </ligand>
</feature>
<feature type="binding site" evidence="1">
    <location>
        <begin position="417"/>
        <end position="419"/>
    </location>
    <ligand>
        <name>GTP</name>
        <dbReference type="ChEBI" id="CHEBI:37565"/>
    </ligand>
</feature>
<name>PURA_SYMTH</name>